<dbReference type="EMBL" id="L32178">
    <property type="protein sequence ID" value="AAA37663.1"/>
    <property type="molecule type" value="mRNA"/>
</dbReference>
<dbReference type="SMR" id="P48057"/>
<dbReference type="GlyCosmos" id="P48057">
    <property type="glycosylation" value="3 sites, No reported glycans"/>
</dbReference>
<dbReference type="MGI" id="MGI:95627">
    <property type="gene designation" value="Slc6a1"/>
</dbReference>
<dbReference type="GO" id="GO:0030424">
    <property type="term" value="C:axon"/>
    <property type="evidence" value="ECO:0007669"/>
    <property type="project" value="TreeGrafter"/>
</dbReference>
<dbReference type="GO" id="GO:0009986">
    <property type="term" value="C:cell surface"/>
    <property type="evidence" value="ECO:0007669"/>
    <property type="project" value="TreeGrafter"/>
</dbReference>
<dbReference type="GO" id="GO:0098982">
    <property type="term" value="C:GABA-ergic synapse"/>
    <property type="evidence" value="ECO:0000314"/>
    <property type="project" value="SynGO"/>
</dbReference>
<dbReference type="GO" id="GO:0005886">
    <property type="term" value="C:plasma membrane"/>
    <property type="evidence" value="ECO:0007669"/>
    <property type="project" value="UniProtKB-SubCell"/>
</dbReference>
<dbReference type="GO" id="GO:0098793">
    <property type="term" value="C:presynapse"/>
    <property type="evidence" value="ECO:0007669"/>
    <property type="project" value="UniProtKB-SubCell"/>
</dbReference>
<dbReference type="GO" id="GO:0005332">
    <property type="term" value="F:gamma-aminobutyric acid:sodium:chloride symporter activity"/>
    <property type="evidence" value="ECO:0000314"/>
    <property type="project" value="UniProtKB"/>
</dbReference>
<dbReference type="GO" id="GO:0098810">
    <property type="term" value="P:neurotransmitter reuptake"/>
    <property type="evidence" value="ECO:0000314"/>
    <property type="project" value="SynGO"/>
</dbReference>
<dbReference type="CDD" id="cd11506">
    <property type="entry name" value="SLC6sbd_GAT1"/>
    <property type="match status" value="1"/>
</dbReference>
<dbReference type="InterPro" id="IPR000175">
    <property type="entry name" value="Na/ntran_symport"/>
</dbReference>
<dbReference type="InterPro" id="IPR002980">
    <property type="entry name" value="Na/ntran_symport_GABA_GAT1"/>
</dbReference>
<dbReference type="InterPro" id="IPR037272">
    <property type="entry name" value="SNS_sf"/>
</dbReference>
<dbReference type="NCBIfam" id="NF037979">
    <property type="entry name" value="Na_transp"/>
    <property type="match status" value="1"/>
</dbReference>
<dbReference type="PANTHER" id="PTHR11616:SF138">
    <property type="entry name" value="SODIUM- AND CHLORIDE-DEPENDENT GABA TRANSPORTER 1"/>
    <property type="match status" value="1"/>
</dbReference>
<dbReference type="PANTHER" id="PTHR11616">
    <property type="entry name" value="SODIUM/CHLORIDE DEPENDENT TRANSPORTER"/>
    <property type="match status" value="1"/>
</dbReference>
<dbReference type="Pfam" id="PF00209">
    <property type="entry name" value="SNF"/>
    <property type="match status" value="1"/>
</dbReference>
<dbReference type="PRINTS" id="PR01195">
    <property type="entry name" value="GAT1TRNSPORT"/>
</dbReference>
<dbReference type="PRINTS" id="PR00176">
    <property type="entry name" value="NANEUSMPORT"/>
</dbReference>
<dbReference type="SUPFAM" id="SSF161070">
    <property type="entry name" value="SNF-like"/>
    <property type="match status" value="1"/>
</dbReference>
<dbReference type="PROSITE" id="PS00610">
    <property type="entry name" value="NA_NEUROTRAN_SYMP_1"/>
    <property type="match status" value="1"/>
</dbReference>
<dbReference type="PROSITE" id="PS00754">
    <property type="entry name" value="NA_NEUROTRAN_SYMP_2"/>
    <property type="match status" value="1"/>
</dbReference>
<dbReference type="PROSITE" id="PS50267">
    <property type="entry name" value="NA_NEUROTRAN_SYMP_3"/>
    <property type="match status" value="1"/>
</dbReference>
<evidence type="ECO:0000250" key="1">
    <source>
        <dbReference type="UniProtKB" id="P23978"/>
    </source>
</evidence>
<evidence type="ECO:0000250" key="2">
    <source>
        <dbReference type="UniProtKB" id="P31648"/>
    </source>
</evidence>
<evidence type="ECO:0000255" key="3"/>
<evidence type="ECO:0000256" key="4">
    <source>
        <dbReference type="SAM" id="MobiDB-lite"/>
    </source>
</evidence>
<evidence type="ECO:0000269" key="5">
    <source>
    </source>
</evidence>
<evidence type="ECO:0000305" key="6"/>
<evidence type="ECO:0000305" key="7">
    <source>
    </source>
</evidence>
<sequence length="598" mass="66783">MATDNSKVADGQISTEVSEAPVASDKPKTLVVKVQKKAGDLPDRDTWKGRFDFLMSCVGYAIGLGNVWRFPYLCGKNGGGAFLIPYFLTLIFAGVPLFLLECSLGQYTSIGGLGVWNVAPMFKGVGLAAAVLSFWLNIYYIVIISWAIYYLYNSFTTTLPWKQCDNPWNTDRCFSNYSLVNTTNMTSAVVEFWERNMHQMTDGLDKPGQIRCLAITLAIAWVLVYFCIWKGVGWTGKVVYFSATYPYIMLIILFFRGVTLPGAKEGILFYITPNFRKLSDSEVWLDAATQIFFSYGLGLGSLIALGSYNSFHNNVYRDSIIVCCINSCTSMFAGFVIFSIVGFMAHVTKRSIADVAASGPGLAFLAYPEAVTQLPISPLWAILFFSMLLMLGIDSQFCTVEGFITALVDEYSRLLRNRRELFIAAVCIVSYLIGLSNITQGGIYVFKLFDYYSASGMSLLFLVFFECVSISWFYGVNRFYDNIQEMVGSRPCIWWKLCWSFFTPIIVAGVFLFSAVQMTPLTMGSYVFPKWGQGVGWLMALSSMVLIPGYMAYMFLTLKGSLKQRLQVMIQPSEDIVRPENGPEQPQAGSSASKEAYI</sequence>
<feature type="chain" id="PRO_0000214745" description="Sodium- and chloride-dependent GABA transporter 1">
    <location>
        <begin position="1"/>
        <end position="598"/>
    </location>
</feature>
<feature type="topological domain" description="Cytoplasmic" evidence="1">
    <location>
        <begin position="1"/>
        <end position="52"/>
    </location>
</feature>
<feature type="transmembrane region" description="Helical; Name=1" evidence="3">
    <location>
        <begin position="53"/>
        <end position="73"/>
    </location>
</feature>
<feature type="topological domain" description="Extracellular" evidence="1">
    <location>
        <begin position="74"/>
        <end position="80"/>
    </location>
</feature>
<feature type="transmembrane region" description="Helical; Name=2" evidence="3">
    <location>
        <begin position="81"/>
        <end position="100"/>
    </location>
</feature>
<feature type="topological domain" description="Cytoplasmic" evidence="1">
    <location>
        <begin position="101"/>
        <end position="123"/>
    </location>
</feature>
<feature type="transmembrane region" description="Helical; Name=3" evidence="3">
    <location>
        <begin position="124"/>
        <end position="144"/>
    </location>
</feature>
<feature type="topological domain" description="Extracellular" evidence="1">
    <location>
        <begin position="145"/>
        <end position="211"/>
    </location>
</feature>
<feature type="transmembrane region" description="Helical; Name=4" evidence="3">
    <location>
        <begin position="212"/>
        <end position="229"/>
    </location>
</feature>
<feature type="topological domain" description="Cytoplasmic" evidence="1">
    <location>
        <begin position="230"/>
        <end position="237"/>
    </location>
</feature>
<feature type="transmembrane region" description="Helical; Name=5" evidence="3">
    <location>
        <begin position="238"/>
        <end position="255"/>
    </location>
</feature>
<feature type="topological domain" description="Extracellular" evidence="1">
    <location>
        <begin position="256"/>
        <end position="290"/>
    </location>
</feature>
<feature type="transmembrane region" description="Helical; Name=6" evidence="3">
    <location>
        <begin position="291"/>
        <end position="308"/>
    </location>
</feature>
<feature type="topological domain" description="Cytoplasmic" evidence="1">
    <location>
        <begin position="309"/>
        <end position="319"/>
    </location>
</feature>
<feature type="transmembrane region" description="Helical; Name=7" evidence="3">
    <location>
        <begin position="320"/>
        <end position="341"/>
    </location>
</feature>
<feature type="topological domain" description="Extracellular" evidence="1">
    <location>
        <begin position="342"/>
        <end position="373"/>
    </location>
</feature>
<feature type="transmembrane region" description="Helical; Name=8" evidence="3">
    <location>
        <begin position="374"/>
        <end position="393"/>
    </location>
</feature>
<feature type="topological domain" description="Cytoplasmic" evidence="1">
    <location>
        <begin position="394"/>
        <end position="420"/>
    </location>
</feature>
<feature type="transmembrane region" description="Helical; Name=9" evidence="3">
    <location>
        <begin position="421"/>
        <end position="439"/>
    </location>
</feature>
<feature type="topological domain" description="Extracellular" evidence="1">
    <location>
        <begin position="440"/>
        <end position="455"/>
    </location>
</feature>
<feature type="transmembrane region" description="Helical; Name=10" evidence="3">
    <location>
        <begin position="456"/>
        <end position="476"/>
    </location>
</feature>
<feature type="topological domain" description="Cytoplasmic" evidence="1">
    <location>
        <begin position="477"/>
        <end position="496"/>
    </location>
</feature>
<feature type="transmembrane region" description="Helical; Name=11" evidence="3">
    <location>
        <begin position="497"/>
        <end position="516"/>
    </location>
</feature>
<feature type="topological domain" description="Extracellular" evidence="1">
    <location>
        <begin position="517"/>
        <end position="534"/>
    </location>
</feature>
<feature type="transmembrane region" description="Helical; Name=12" evidence="3">
    <location>
        <begin position="535"/>
        <end position="553"/>
    </location>
</feature>
<feature type="topological domain" description="Cytoplasmic" evidence="1">
    <location>
        <begin position="554"/>
        <end position="598"/>
    </location>
</feature>
<feature type="region of interest" description="Disordered" evidence="4">
    <location>
        <begin position="1"/>
        <end position="23"/>
    </location>
</feature>
<feature type="region of interest" description="Disordered" evidence="4">
    <location>
        <begin position="576"/>
        <end position="598"/>
    </location>
</feature>
<feature type="short sequence motif" description="PDZ-binding">
    <location>
        <begin position="596"/>
        <end position="598"/>
    </location>
</feature>
<feature type="compositionally biased region" description="Polar residues" evidence="4">
    <location>
        <begin position="1"/>
        <end position="17"/>
    </location>
</feature>
<feature type="compositionally biased region" description="Polar residues" evidence="4">
    <location>
        <begin position="587"/>
        <end position="598"/>
    </location>
</feature>
<feature type="modified residue" description="Phosphoserine" evidence="2">
    <location>
        <position position="18"/>
    </location>
</feature>
<feature type="modified residue" description="Phosphoserine" evidence="2">
    <location>
        <position position="590"/>
    </location>
</feature>
<feature type="glycosylation site" description="N-linked (GlcNAc...) asparagine" evidence="3">
    <location>
        <position position="176"/>
    </location>
</feature>
<feature type="glycosylation site" description="N-linked (GlcNAc...) asparagine" evidence="3">
    <location>
        <position position="181"/>
    </location>
</feature>
<feature type="glycosylation site" description="N-linked (GlcNAc...) asparagine" evidence="3">
    <location>
        <position position="184"/>
    </location>
</feature>
<name>SC6A1_MUSCO</name>
<accession>P48057</accession>
<gene>
    <name type="primary">Slc6a1</name>
    <name type="synonym">Gabt1</name>
    <name type="synonym">Gat-1</name>
    <name type="synonym">Gat1</name>
</gene>
<protein>
    <recommendedName>
        <fullName>Sodium- and chloride-dependent GABA transporter 1</fullName>
        <shortName>GAT-1</shortName>
    </recommendedName>
    <alternativeName>
        <fullName>Solute carrier family 6 member 1</fullName>
    </alternativeName>
</protein>
<reference key="1">
    <citation type="journal article" date="1994" name="Invest. Ophthalmol. Vis. Sci.">
        <title>Cloning, expression, and localization of a mouse retinal gamma-aminobutyric acid transporter.</title>
        <authorList>
            <person name="Ruiz M."/>
            <person name="Egal H."/>
            <person name="Sarthy V.P."/>
            <person name="Qian X.J."/>
            <person name="Sarkar H.K."/>
        </authorList>
    </citation>
    <scope>NUCLEOTIDE SEQUENCE [MRNA]</scope>
    <scope>FUNCTION</scope>
    <scope>TRANSPORTER ACTIVITY</scope>
    <scope>BIOPHYSICOCHEMICAL PROPERTIES</scope>
    <scope>ACTIVITY REGULATION</scope>
    <source>
        <tissue>Retina</tissue>
    </source>
</reference>
<comment type="function">
    <text evidence="1 2 5">Mediates transport of gamma-aminobutyric acid (GABA) together with sodium and chloride and is responsible for the reuptake of GABA from the synapse (PubMed:7960586). The translocation of GABA, however, may also occur in the reverse direction leading to the release of GABA (By similarity). The direction and magnitude of GABA transport is a consequence of the prevailing thermodynamic conditions, determined by membrane potential and the intracellular and extracellular concentrations of Na(+), Cl(-) and GABA (By similarity). Can also mediate sodium- and chloride-dependent transport of hypotaurine but to a much lower extent as compared to GABA (By similarity).</text>
</comment>
<comment type="catalytic activity">
    <reaction evidence="5">
        <text>4-aminobutanoate(out) + chloride(out) + 2 Na(+)(out) = 4-aminobutanoate(in) + chloride(in) + 2 Na(+)(in)</text>
        <dbReference type="Rhea" id="RHEA:70687"/>
        <dbReference type="ChEBI" id="CHEBI:17996"/>
        <dbReference type="ChEBI" id="CHEBI:29101"/>
        <dbReference type="ChEBI" id="CHEBI:59888"/>
    </reaction>
    <physiologicalReaction direction="left-to-right" evidence="7">
        <dbReference type="Rhea" id="RHEA:70688"/>
    </physiologicalReaction>
    <physiologicalReaction direction="right-to-left" evidence="1">
        <dbReference type="Rhea" id="RHEA:70689"/>
    </physiologicalReaction>
</comment>
<comment type="catalytic activity">
    <reaction evidence="2">
        <text>hypotaurine(out) + chloride(out) + 2 Na(+)(out) = hypotaurine(in) + chloride(in) + 2 Na(+)(in)</text>
        <dbReference type="Rhea" id="RHEA:71243"/>
        <dbReference type="ChEBI" id="CHEBI:17996"/>
        <dbReference type="ChEBI" id="CHEBI:29101"/>
        <dbReference type="ChEBI" id="CHEBI:57853"/>
    </reaction>
    <physiologicalReaction direction="left-to-right" evidence="2">
        <dbReference type="Rhea" id="RHEA:71244"/>
    </physiologicalReaction>
</comment>
<comment type="activity regulation">
    <text evidence="5">Inhibited by L-diaminobutyric acid, guvacine, cis-4-hydroxynipecotic acid, nipecotic acid, and 4,5,6,7-tetrahydroisoxazolo [4,5c]-pyridin-3-ol.</text>
</comment>
<comment type="biophysicochemical properties">
    <kinetics>
        <KM evidence="5">8.3 uM for GABA</KM>
    </kinetics>
</comment>
<comment type="subunit">
    <text evidence="2">Interacts (via PDZ domain-binding motif) with PALS1; interaction increases SLC6A1-mediated GABA uptake.</text>
</comment>
<comment type="subcellular location">
    <subcellularLocation>
        <location evidence="1">Cell membrane</location>
        <topology evidence="3">Multi-pass membrane protein</topology>
    </subcellularLocation>
    <subcellularLocation>
        <location evidence="2">Presynapse</location>
    </subcellularLocation>
    <text evidence="2">Localized at the presynaptic terminals of interneurons.</text>
</comment>
<comment type="tissue specificity">
    <text evidence="5">Retinal neurons.</text>
</comment>
<comment type="miscellaneous">
    <text>This protein is the target of psychomotor stimulants such as amphetamines or cocaine.</text>
</comment>
<comment type="similarity">
    <text evidence="6">Belongs to the sodium:neurotransmitter symporter (SNF) (TC 2.A.22) family. SLC6A1 subfamily.</text>
</comment>
<keyword id="KW-1003">Cell membrane</keyword>
<keyword id="KW-0966">Cell projection</keyword>
<keyword id="KW-0325">Glycoprotein</keyword>
<keyword id="KW-0472">Membrane</keyword>
<keyword id="KW-0532">Neurotransmitter transport</keyword>
<keyword id="KW-0597">Phosphoprotein</keyword>
<keyword id="KW-0769">Symport</keyword>
<keyword id="KW-0770">Synapse</keyword>
<keyword id="KW-0812">Transmembrane</keyword>
<keyword id="KW-1133">Transmembrane helix</keyword>
<keyword id="KW-0813">Transport</keyword>
<organism>
    <name type="scientific">Mus cookii</name>
    <name type="common">Cook's mouse</name>
    <dbReference type="NCBI Taxonomy" id="10098"/>
    <lineage>
        <taxon>Eukaryota</taxon>
        <taxon>Metazoa</taxon>
        <taxon>Chordata</taxon>
        <taxon>Craniata</taxon>
        <taxon>Vertebrata</taxon>
        <taxon>Euteleostomi</taxon>
        <taxon>Mammalia</taxon>
        <taxon>Eutheria</taxon>
        <taxon>Euarchontoglires</taxon>
        <taxon>Glires</taxon>
        <taxon>Rodentia</taxon>
        <taxon>Myomorpha</taxon>
        <taxon>Muroidea</taxon>
        <taxon>Muridae</taxon>
        <taxon>Murinae</taxon>
        <taxon>Mus</taxon>
        <taxon>Mus</taxon>
    </lineage>
</organism>
<proteinExistence type="evidence at protein level"/>